<name>PSMD2_DICDI</name>
<comment type="function">
    <text evidence="1">Acts as a regulatory subunit of the 26 proteasome which is involved in the ATP-dependent degradation of ubiquitinated proteins.</text>
</comment>
<comment type="similarity">
    <text evidence="4">Belongs to the proteasome subunit S2 family.</text>
</comment>
<accession>Q54BC6</accession>
<keyword id="KW-0903">Direct protein sequencing</keyword>
<keyword id="KW-0647">Proteasome</keyword>
<keyword id="KW-1185">Reference proteome</keyword>
<keyword id="KW-0677">Repeat</keyword>
<proteinExistence type="evidence at protein level"/>
<feature type="initiator methionine" description="Removed" evidence="3">
    <location>
        <position position="1"/>
    </location>
</feature>
<feature type="chain" id="PRO_0000327454" description="26S proteasome non-ATPase regulatory subunit 2">
    <location>
        <begin position="2"/>
        <end position="893"/>
    </location>
</feature>
<feature type="repeat" description="PC 1">
    <location>
        <begin position="412"/>
        <end position="445"/>
    </location>
</feature>
<feature type="repeat" description="PC 2">
    <location>
        <begin position="446"/>
        <end position="482"/>
    </location>
</feature>
<feature type="repeat" description="PC 3">
    <location>
        <begin position="483"/>
        <end position="517"/>
    </location>
</feature>
<feature type="repeat" description="PC 4">
    <location>
        <begin position="522"/>
        <end position="555"/>
    </location>
</feature>
<feature type="repeat" description="PC 5">
    <location>
        <begin position="562"/>
        <end position="583"/>
    </location>
</feature>
<feature type="repeat" description="PC 6">
    <location>
        <begin position="666"/>
        <end position="700"/>
    </location>
</feature>
<feature type="repeat" description="PC 7">
    <location>
        <begin position="701"/>
        <end position="735"/>
    </location>
</feature>
<feature type="region of interest" description="Disordered" evidence="2">
    <location>
        <begin position="1"/>
        <end position="59"/>
    </location>
</feature>
<feature type="compositionally biased region" description="Basic and acidic residues" evidence="2">
    <location>
        <begin position="16"/>
        <end position="32"/>
    </location>
</feature>
<feature type="compositionally biased region" description="Basic and acidic residues" evidence="2">
    <location>
        <begin position="40"/>
        <end position="59"/>
    </location>
</feature>
<gene>
    <name type="primary">psmD2</name>
    <name type="ORF">DDB_G0293752</name>
</gene>
<protein>
    <recommendedName>
        <fullName>26S proteasome non-ATPase regulatory subunit 2</fullName>
    </recommendedName>
</protein>
<evidence type="ECO:0000250" key="1"/>
<evidence type="ECO:0000256" key="2">
    <source>
        <dbReference type="SAM" id="MobiDB-lite"/>
    </source>
</evidence>
<evidence type="ECO:0000269" key="3">
    <source ref="2"/>
</evidence>
<evidence type="ECO:0000305" key="4"/>
<organism>
    <name type="scientific">Dictyostelium discoideum</name>
    <name type="common">Social amoeba</name>
    <dbReference type="NCBI Taxonomy" id="44689"/>
    <lineage>
        <taxon>Eukaryota</taxon>
        <taxon>Amoebozoa</taxon>
        <taxon>Evosea</taxon>
        <taxon>Eumycetozoa</taxon>
        <taxon>Dictyostelia</taxon>
        <taxon>Dictyosteliales</taxon>
        <taxon>Dictyosteliaceae</taxon>
        <taxon>Dictyostelium</taxon>
    </lineage>
</organism>
<reference key="1">
    <citation type="journal article" date="2005" name="Nature">
        <title>The genome of the social amoeba Dictyostelium discoideum.</title>
        <authorList>
            <person name="Eichinger L."/>
            <person name="Pachebat J.A."/>
            <person name="Gloeckner G."/>
            <person name="Rajandream M.A."/>
            <person name="Sucgang R."/>
            <person name="Berriman M."/>
            <person name="Song J."/>
            <person name="Olsen R."/>
            <person name="Szafranski K."/>
            <person name="Xu Q."/>
            <person name="Tunggal B."/>
            <person name="Kummerfeld S."/>
            <person name="Madera M."/>
            <person name="Konfortov B.A."/>
            <person name="Rivero F."/>
            <person name="Bankier A.T."/>
            <person name="Lehmann R."/>
            <person name="Hamlin N."/>
            <person name="Davies R."/>
            <person name="Gaudet P."/>
            <person name="Fey P."/>
            <person name="Pilcher K."/>
            <person name="Chen G."/>
            <person name="Saunders D."/>
            <person name="Sodergren E.J."/>
            <person name="Davis P."/>
            <person name="Kerhornou A."/>
            <person name="Nie X."/>
            <person name="Hall N."/>
            <person name="Anjard C."/>
            <person name="Hemphill L."/>
            <person name="Bason N."/>
            <person name="Farbrother P."/>
            <person name="Desany B."/>
            <person name="Just E."/>
            <person name="Morio T."/>
            <person name="Rost R."/>
            <person name="Churcher C.M."/>
            <person name="Cooper J."/>
            <person name="Haydock S."/>
            <person name="van Driessche N."/>
            <person name="Cronin A."/>
            <person name="Goodhead I."/>
            <person name="Muzny D.M."/>
            <person name="Mourier T."/>
            <person name="Pain A."/>
            <person name="Lu M."/>
            <person name="Harper D."/>
            <person name="Lindsay R."/>
            <person name="Hauser H."/>
            <person name="James K.D."/>
            <person name="Quiles M."/>
            <person name="Madan Babu M."/>
            <person name="Saito T."/>
            <person name="Buchrieser C."/>
            <person name="Wardroper A."/>
            <person name="Felder M."/>
            <person name="Thangavelu M."/>
            <person name="Johnson D."/>
            <person name="Knights A."/>
            <person name="Loulseged H."/>
            <person name="Mungall K.L."/>
            <person name="Oliver K."/>
            <person name="Price C."/>
            <person name="Quail M.A."/>
            <person name="Urushihara H."/>
            <person name="Hernandez J."/>
            <person name="Rabbinowitsch E."/>
            <person name="Steffen D."/>
            <person name="Sanders M."/>
            <person name="Ma J."/>
            <person name="Kohara Y."/>
            <person name="Sharp S."/>
            <person name="Simmonds M.N."/>
            <person name="Spiegler S."/>
            <person name="Tivey A."/>
            <person name="Sugano S."/>
            <person name="White B."/>
            <person name="Walker D."/>
            <person name="Woodward J.R."/>
            <person name="Winckler T."/>
            <person name="Tanaka Y."/>
            <person name="Shaulsky G."/>
            <person name="Schleicher M."/>
            <person name="Weinstock G.M."/>
            <person name="Rosenthal A."/>
            <person name="Cox E.C."/>
            <person name="Chisholm R.L."/>
            <person name="Gibbs R.A."/>
            <person name="Loomis W.F."/>
            <person name="Platzer M."/>
            <person name="Kay R.R."/>
            <person name="Williams J.G."/>
            <person name="Dear P.H."/>
            <person name="Noegel A.A."/>
            <person name="Barrell B.G."/>
            <person name="Kuspa A."/>
        </authorList>
    </citation>
    <scope>NUCLEOTIDE SEQUENCE [LARGE SCALE GENOMIC DNA]</scope>
    <source>
        <strain>AX4</strain>
    </source>
</reference>
<reference key="2">
    <citation type="submission" date="2009-07" db="UniProtKB">
        <authorList>
            <person name="Bienvenut W.V."/>
            <person name="Ura S."/>
            <person name="Insall R.H."/>
        </authorList>
    </citation>
    <scope>PROTEIN SEQUENCE OF 2-13; 111-121; 351-371; 460-497; 666-689; 724-731 AND 805-855</scope>
    <scope>CLEAVAGE OF INITIATOR METHIONINE</scope>
    <scope>IDENTIFICATION BY MASS SPECTROMETRY</scope>
    <source>
        <strain>AX2</strain>
    </source>
</reference>
<dbReference type="EMBL" id="AAFI02000219">
    <property type="protein sequence ID" value="EAL60553.1"/>
    <property type="molecule type" value="Genomic_DNA"/>
</dbReference>
<dbReference type="RefSeq" id="XP_628968.1">
    <property type="nucleotide sequence ID" value="XM_628966.1"/>
</dbReference>
<dbReference type="SMR" id="Q54BC6"/>
<dbReference type="BioGRID" id="1254399">
    <property type="interactions" value="1"/>
</dbReference>
<dbReference type="FunCoup" id="Q54BC6">
    <property type="interactions" value="1388"/>
</dbReference>
<dbReference type="STRING" id="44689.Q54BC6"/>
<dbReference type="PaxDb" id="44689-DDB0232978"/>
<dbReference type="EnsemblProtists" id="EAL60553">
    <property type="protein sequence ID" value="EAL60553"/>
    <property type="gene ID" value="DDB_G0293752"/>
</dbReference>
<dbReference type="GeneID" id="8629396"/>
<dbReference type="KEGG" id="ddi:DDB_G0293752"/>
<dbReference type="dictyBase" id="DDB_G0293752">
    <property type="gene designation" value="psmD2"/>
</dbReference>
<dbReference type="VEuPathDB" id="AmoebaDB:DDB_G0293752"/>
<dbReference type="eggNOG" id="KOG2005">
    <property type="taxonomic scope" value="Eukaryota"/>
</dbReference>
<dbReference type="HOGENOM" id="CLU_008705_1_0_1"/>
<dbReference type="InParanoid" id="Q54BC6"/>
<dbReference type="OMA" id="GTCNGDI"/>
<dbReference type="PhylomeDB" id="Q54BC6"/>
<dbReference type="Reactome" id="R-DDI-1236978">
    <property type="pathway name" value="Cross-presentation of soluble exogenous antigens (endosomes)"/>
</dbReference>
<dbReference type="Reactome" id="R-DDI-174084">
    <property type="pathway name" value="Autodegradation of Cdh1 by Cdh1:APC/C"/>
</dbReference>
<dbReference type="Reactome" id="R-DDI-174154">
    <property type="pathway name" value="APC/C:Cdc20 mediated degradation of Securin"/>
</dbReference>
<dbReference type="Reactome" id="R-DDI-174178">
    <property type="pathway name" value="APC/C:Cdh1 mediated degradation of Cdc20 and other APC/C:Cdh1 targeted proteins in late mitosis/early G1"/>
</dbReference>
<dbReference type="Reactome" id="R-DDI-2467813">
    <property type="pathway name" value="Separation of Sister Chromatids"/>
</dbReference>
<dbReference type="Reactome" id="R-DDI-349425">
    <property type="pathway name" value="Autodegradation of the E3 ubiquitin ligase COP1"/>
</dbReference>
<dbReference type="Reactome" id="R-DDI-382556">
    <property type="pathway name" value="ABC-family proteins mediated transport"/>
</dbReference>
<dbReference type="Reactome" id="R-DDI-450408">
    <property type="pathway name" value="AUF1 (hnRNP D0) binds and destabilizes mRNA"/>
</dbReference>
<dbReference type="Reactome" id="R-DDI-4641258">
    <property type="pathway name" value="Degradation of DVL"/>
</dbReference>
<dbReference type="Reactome" id="R-DDI-5632684">
    <property type="pathway name" value="Hedgehog 'on' state"/>
</dbReference>
<dbReference type="Reactome" id="R-DDI-5658442">
    <property type="pathway name" value="Regulation of RAS by GAPs"/>
</dbReference>
<dbReference type="Reactome" id="R-DDI-5687128">
    <property type="pathway name" value="MAPK6/MAPK4 signaling"/>
</dbReference>
<dbReference type="Reactome" id="R-DDI-5689603">
    <property type="pathway name" value="UCH proteinases"/>
</dbReference>
<dbReference type="Reactome" id="R-DDI-5689880">
    <property type="pathway name" value="Ub-specific processing proteases"/>
</dbReference>
<dbReference type="Reactome" id="R-DDI-6798695">
    <property type="pathway name" value="Neutrophil degranulation"/>
</dbReference>
<dbReference type="Reactome" id="R-DDI-68949">
    <property type="pathway name" value="Orc1 removal from chromatin"/>
</dbReference>
<dbReference type="Reactome" id="R-DDI-69017">
    <property type="pathway name" value="CDK-mediated phosphorylation and removal of Cdc6"/>
</dbReference>
<dbReference type="Reactome" id="R-DDI-69601">
    <property type="pathway name" value="Ubiquitin Mediated Degradation of Phosphorylated Cdc25A"/>
</dbReference>
<dbReference type="Reactome" id="R-DDI-8854050">
    <property type="pathway name" value="FBXL7 down-regulates AURKA during mitotic entry and in early mitosis"/>
</dbReference>
<dbReference type="Reactome" id="R-DDI-8948751">
    <property type="pathway name" value="Regulation of PTEN stability and activity"/>
</dbReference>
<dbReference type="Reactome" id="R-DDI-8951664">
    <property type="pathway name" value="Neddylation"/>
</dbReference>
<dbReference type="Reactome" id="R-DDI-9755511">
    <property type="pathway name" value="KEAP1-NFE2L2 pathway"/>
</dbReference>
<dbReference type="Reactome" id="R-DDI-983168">
    <property type="pathway name" value="Antigen processing: Ubiquitination &amp; Proteasome degradation"/>
</dbReference>
<dbReference type="Reactome" id="R-DDI-9907900">
    <property type="pathway name" value="Proteasome assembly"/>
</dbReference>
<dbReference type="PRO" id="PR:Q54BC6"/>
<dbReference type="Proteomes" id="UP000002195">
    <property type="component" value="Chromosome 6"/>
</dbReference>
<dbReference type="GO" id="GO:0005776">
    <property type="term" value="C:autophagosome"/>
    <property type="evidence" value="ECO:0000314"/>
    <property type="project" value="dictyBase"/>
</dbReference>
<dbReference type="GO" id="GO:0005764">
    <property type="term" value="C:lysosome"/>
    <property type="evidence" value="ECO:0000314"/>
    <property type="project" value="dictyBase"/>
</dbReference>
<dbReference type="GO" id="GO:0005634">
    <property type="term" value="C:nucleus"/>
    <property type="evidence" value="ECO:0000250"/>
    <property type="project" value="dictyBase"/>
</dbReference>
<dbReference type="GO" id="GO:0008540">
    <property type="term" value="C:proteasome regulatory particle, base subcomplex"/>
    <property type="evidence" value="ECO:0000318"/>
    <property type="project" value="GO_Central"/>
</dbReference>
<dbReference type="GO" id="GO:0034515">
    <property type="term" value="C:proteasome storage granule"/>
    <property type="evidence" value="ECO:0000318"/>
    <property type="project" value="GO_Central"/>
</dbReference>
<dbReference type="GO" id="GO:0030234">
    <property type="term" value="F:enzyme regulator activity"/>
    <property type="evidence" value="ECO:0007669"/>
    <property type="project" value="InterPro"/>
</dbReference>
<dbReference type="GO" id="GO:0006972">
    <property type="term" value="P:hyperosmotic response"/>
    <property type="evidence" value="ECO:0000270"/>
    <property type="project" value="dictyBase"/>
</dbReference>
<dbReference type="GO" id="GO:0043161">
    <property type="term" value="P:proteasome-mediated ubiquitin-dependent protein catabolic process"/>
    <property type="evidence" value="ECO:0000318"/>
    <property type="project" value="GO_Central"/>
</dbReference>
<dbReference type="GO" id="GO:0042176">
    <property type="term" value="P:regulation of protein catabolic process"/>
    <property type="evidence" value="ECO:0007669"/>
    <property type="project" value="InterPro"/>
</dbReference>
<dbReference type="FunFam" id="1.25.10.10:FF:000026">
    <property type="entry name" value="26S proteasome non-ATPase regulatory subunit 2"/>
    <property type="match status" value="1"/>
</dbReference>
<dbReference type="Gene3D" id="1.25.10.10">
    <property type="entry name" value="Leucine-rich Repeat Variant"/>
    <property type="match status" value="1"/>
</dbReference>
<dbReference type="InterPro" id="IPR016643">
    <property type="entry name" value="26S_Psome_Rpn1"/>
</dbReference>
<dbReference type="InterPro" id="IPR011989">
    <property type="entry name" value="ARM-like"/>
</dbReference>
<dbReference type="InterPro" id="IPR016024">
    <property type="entry name" value="ARM-type_fold"/>
</dbReference>
<dbReference type="InterPro" id="IPR002015">
    <property type="entry name" value="Proteasome/cyclosome_rpt"/>
</dbReference>
<dbReference type="InterPro" id="IPR041433">
    <property type="entry name" value="RPN1_C"/>
</dbReference>
<dbReference type="InterPro" id="IPR040892">
    <property type="entry name" value="RPN1_N"/>
</dbReference>
<dbReference type="PANTHER" id="PTHR10943">
    <property type="entry name" value="26S PROTEASOME NON-ATPASE REGULATORY SUBUNIT"/>
    <property type="match status" value="1"/>
</dbReference>
<dbReference type="PANTHER" id="PTHR10943:SF1">
    <property type="entry name" value="26S PROTEASOME NON-ATPASE REGULATORY SUBUNIT 2"/>
    <property type="match status" value="1"/>
</dbReference>
<dbReference type="Pfam" id="PF01851">
    <property type="entry name" value="PC_rep"/>
    <property type="match status" value="1"/>
</dbReference>
<dbReference type="Pfam" id="PF18051">
    <property type="entry name" value="RPN1_C"/>
    <property type="match status" value="1"/>
</dbReference>
<dbReference type="Pfam" id="PF17781">
    <property type="entry name" value="RPN1_RPN2_N"/>
    <property type="match status" value="1"/>
</dbReference>
<dbReference type="PIRSF" id="PIRSF015965">
    <property type="entry name" value="26S_Psome_Rpn1"/>
    <property type="match status" value="1"/>
</dbReference>
<dbReference type="SUPFAM" id="SSF48371">
    <property type="entry name" value="ARM repeat"/>
    <property type="match status" value="1"/>
</dbReference>
<sequence>MPQKEVTIPVPAKGGSNKEEDKKDNKDTEEKNTTTNTTTKDNKKDKKKDKKEETLSPEDEKLKNDLELLVERSRDEKEEIALAALEALKTEIRSSTSSMTSVPKPLKFLRNHYSTLVDIYKNSKEGKAKTSLADILSVLAMANGNDERDTLKYKLLGSGEAIASWGHEYVKHLATEIGVEYDIKKEENQSVEDLLKLVDEIVPFQMTHNAEPEACDLLLEVEQLSKIFQYIDENNYSRVCLYLFKCSYYVPGPDDINILKVCVEIYIKMKQYPDALRVAMKISDPELITEIFKLVENNKSILQQLGFLVARQKIVPDNFNYDSISDIINNSKLSEYFMNLATDLDIREPKLPEEIFQSHLDSTSAIADSARMNLASSFVNAFVNAGFGKDKLMTAEEDTKWWFKNRELGILSTVASTGMVVLWDIDGGLTKIDKFLYSQEKHCSNGALMAIGMLTSGIRSEMDPALSLLAEHINSSNTGTRISAIFGLGLAYAGTQRQDLMSLLSPCLDDDKEKMEFIGIVGLALGLIFIGSCDPELSTLFVQTLIQRGTAASESHARFLHLGLGLLYLGKQDAAELALETLKAIEGKGGEYARLTVEACAYAGTGNVLKVQNMLHFCSDGQENPHHGLAVLSIALIAMGEELGSDMCLRMFDHLLQKGNVHIKRAIPLALGLLSPSNPRIAIMDILSKLSHDNDPEVAQGAILSLGLIGAGTNNARIGGMLRALAVFYGKDVHLFFVRIAQGLLHLGKGTMTINPYHSDRTLMSPVAVGGLLALLHAGLDIKNILSTQSHYLFFSIVCSMYPRMLMTLDEDLKPLPVSVRVGQSVDIVGLAGKPKTITGFQTHTTPVLLGYNERAELATDDYIPLTNILEGIVILKPNPNASVTSPLASKKN</sequence>